<name>DAPD_WIGBR</name>
<organism>
    <name type="scientific">Wigglesworthia glossinidia brevipalpis</name>
    <dbReference type="NCBI Taxonomy" id="36870"/>
    <lineage>
        <taxon>Bacteria</taxon>
        <taxon>Pseudomonadati</taxon>
        <taxon>Pseudomonadota</taxon>
        <taxon>Gammaproteobacteria</taxon>
        <taxon>Enterobacterales</taxon>
        <taxon>Erwiniaceae</taxon>
        <taxon>Wigglesworthia</taxon>
    </lineage>
</organism>
<accession>Q8D2G0</accession>
<comment type="catalytic activity">
    <reaction evidence="1">
        <text>(S)-2,3,4,5-tetrahydrodipicolinate + succinyl-CoA + H2O = (S)-2-succinylamino-6-oxoheptanedioate + CoA</text>
        <dbReference type="Rhea" id="RHEA:17325"/>
        <dbReference type="ChEBI" id="CHEBI:15377"/>
        <dbReference type="ChEBI" id="CHEBI:15685"/>
        <dbReference type="ChEBI" id="CHEBI:16845"/>
        <dbReference type="ChEBI" id="CHEBI:57287"/>
        <dbReference type="ChEBI" id="CHEBI:57292"/>
        <dbReference type="EC" id="2.3.1.117"/>
    </reaction>
</comment>
<comment type="pathway">
    <text evidence="1">Amino-acid biosynthesis; L-lysine biosynthesis via DAP pathway; LL-2,6-diaminopimelate from (S)-tetrahydrodipicolinate (succinylase route): step 1/3.</text>
</comment>
<comment type="subunit">
    <text evidence="1">Homotrimer.</text>
</comment>
<comment type="subcellular location">
    <subcellularLocation>
        <location evidence="1">Cytoplasm</location>
    </subcellularLocation>
</comment>
<comment type="similarity">
    <text evidence="1">Belongs to the transferase hexapeptide repeat family.</text>
</comment>
<dbReference type="EC" id="2.3.1.117" evidence="1"/>
<dbReference type="EMBL" id="BA000021">
    <property type="protein sequence ID" value="BAC24540.1"/>
    <property type="molecule type" value="Genomic_DNA"/>
</dbReference>
<dbReference type="SMR" id="Q8D2G0"/>
<dbReference type="STRING" id="36870.gene:10368894"/>
<dbReference type="KEGG" id="wbr:dapD"/>
<dbReference type="eggNOG" id="COG2171">
    <property type="taxonomic scope" value="Bacteria"/>
</dbReference>
<dbReference type="HOGENOM" id="CLU_050859_0_1_6"/>
<dbReference type="UniPathway" id="UPA00034">
    <property type="reaction ID" value="UER00019"/>
</dbReference>
<dbReference type="Proteomes" id="UP000000562">
    <property type="component" value="Chromosome"/>
</dbReference>
<dbReference type="GO" id="GO:0005737">
    <property type="term" value="C:cytoplasm"/>
    <property type="evidence" value="ECO:0007669"/>
    <property type="project" value="UniProtKB-SubCell"/>
</dbReference>
<dbReference type="GO" id="GO:0008666">
    <property type="term" value="F:2,3,4,5-tetrahydropyridine-2,6-dicarboxylate N-succinyltransferase activity"/>
    <property type="evidence" value="ECO:0007669"/>
    <property type="project" value="UniProtKB-UniRule"/>
</dbReference>
<dbReference type="GO" id="GO:0019877">
    <property type="term" value="P:diaminopimelate biosynthetic process"/>
    <property type="evidence" value="ECO:0007669"/>
    <property type="project" value="UniProtKB-UniRule"/>
</dbReference>
<dbReference type="GO" id="GO:0009089">
    <property type="term" value="P:lysine biosynthetic process via diaminopimelate"/>
    <property type="evidence" value="ECO:0007669"/>
    <property type="project" value="UniProtKB-UniRule"/>
</dbReference>
<dbReference type="CDD" id="cd03350">
    <property type="entry name" value="LbH_THP_succinylT"/>
    <property type="match status" value="1"/>
</dbReference>
<dbReference type="Gene3D" id="2.160.10.10">
    <property type="entry name" value="Hexapeptide repeat proteins"/>
    <property type="match status" value="1"/>
</dbReference>
<dbReference type="Gene3D" id="1.10.166.10">
    <property type="entry name" value="Tetrahydrodipicolinate-N-succinyltransferase, N-terminal domain"/>
    <property type="match status" value="1"/>
</dbReference>
<dbReference type="HAMAP" id="MF_00811">
    <property type="entry name" value="DapD"/>
    <property type="match status" value="1"/>
</dbReference>
<dbReference type="InterPro" id="IPR005664">
    <property type="entry name" value="DapD_Trfase_Hexpep_rpt_fam"/>
</dbReference>
<dbReference type="InterPro" id="IPR001451">
    <property type="entry name" value="Hexapep"/>
</dbReference>
<dbReference type="InterPro" id="IPR023180">
    <property type="entry name" value="THP_succinylTrfase_dom1"/>
</dbReference>
<dbReference type="InterPro" id="IPR037133">
    <property type="entry name" value="THP_succinylTrfase_N_sf"/>
</dbReference>
<dbReference type="InterPro" id="IPR050179">
    <property type="entry name" value="Trans_hexapeptide_repeat"/>
</dbReference>
<dbReference type="InterPro" id="IPR011004">
    <property type="entry name" value="Trimer_LpxA-like_sf"/>
</dbReference>
<dbReference type="NCBIfam" id="TIGR00965">
    <property type="entry name" value="dapD"/>
    <property type="match status" value="1"/>
</dbReference>
<dbReference type="NCBIfam" id="NF008808">
    <property type="entry name" value="PRK11830.1"/>
    <property type="match status" value="1"/>
</dbReference>
<dbReference type="PANTHER" id="PTHR43300:SF10">
    <property type="entry name" value="2,3,4,5-TETRAHYDROPYRIDINE-2,6-DICARBOXYLATE N-ACETYLTRANSFERASE"/>
    <property type="match status" value="1"/>
</dbReference>
<dbReference type="PANTHER" id="PTHR43300">
    <property type="entry name" value="ACETYLTRANSFERASE"/>
    <property type="match status" value="1"/>
</dbReference>
<dbReference type="Pfam" id="PF00132">
    <property type="entry name" value="Hexapep"/>
    <property type="match status" value="1"/>
</dbReference>
<dbReference type="Pfam" id="PF14602">
    <property type="entry name" value="Hexapep_2"/>
    <property type="match status" value="1"/>
</dbReference>
<dbReference type="Pfam" id="PF14805">
    <property type="entry name" value="THDPS_N_2"/>
    <property type="match status" value="1"/>
</dbReference>
<dbReference type="SUPFAM" id="SSF51161">
    <property type="entry name" value="Trimeric LpxA-like enzymes"/>
    <property type="match status" value="1"/>
</dbReference>
<reference key="1">
    <citation type="journal article" date="2002" name="Nat. Genet.">
        <title>Genome sequence of the endocellular obligate symbiont of tsetse flies, Wigglesworthia glossinidia.</title>
        <authorList>
            <person name="Akman L."/>
            <person name="Yamashita A."/>
            <person name="Watanabe H."/>
            <person name="Oshima K."/>
            <person name="Shiba T."/>
            <person name="Hattori M."/>
            <person name="Aksoy S."/>
        </authorList>
    </citation>
    <scope>NUCLEOTIDE SEQUENCE [LARGE SCALE GENOMIC DNA]</scope>
</reference>
<proteinExistence type="inferred from homology"/>
<keyword id="KW-0012">Acyltransferase</keyword>
<keyword id="KW-0028">Amino-acid biosynthesis</keyword>
<keyword id="KW-0963">Cytoplasm</keyword>
<keyword id="KW-0220">Diaminopimelate biosynthesis</keyword>
<keyword id="KW-0457">Lysine biosynthesis</keyword>
<keyword id="KW-1185">Reference proteome</keyword>
<keyword id="KW-0677">Repeat</keyword>
<keyword id="KW-0808">Transferase</keyword>
<sequence>MINKFKKTIETSFEKKEHLKKCVDPLLKNTIISIINLLDKGKIRVAEKKNGTWITNQWIKKSILIYFCIFKNKLIISENMNFFDKISMKFEKWDHDDFCKHKIRAVPCSFVRKGSFIAKNSVIMPSYINIGAYIGENSTIDTWSTIGSCAQIGKNVHISGGVGIGGVLEPVQNNPTIIEDNCFIGARSEIVEGVVVESGSVISMGVFIGKSTKIYDSINNKIYYGRIPKKSVVIPGSLPSKNNRFNINCAIIIKKPDHETKRKIKMNSILHLNN</sequence>
<feature type="chain" id="PRO_0000196973" description="2,3,4,5-tetrahydropyridine-2,6-dicarboxylate N-succinyltransferase">
    <location>
        <begin position="1"/>
        <end position="274"/>
    </location>
</feature>
<feature type="binding site" evidence="1">
    <location>
        <position position="104"/>
    </location>
    <ligand>
        <name>substrate</name>
    </ligand>
</feature>
<feature type="binding site" evidence="1">
    <location>
        <position position="141"/>
    </location>
    <ligand>
        <name>substrate</name>
    </ligand>
</feature>
<evidence type="ECO:0000255" key="1">
    <source>
        <dbReference type="HAMAP-Rule" id="MF_00811"/>
    </source>
</evidence>
<protein>
    <recommendedName>
        <fullName evidence="1">2,3,4,5-tetrahydropyridine-2,6-dicarboxylate N-succinyltransferase</fullName>
        <ecNumber evidence="1">2.3.1.117</ecNumber>
    </recommendedName>
    <alternativeName>
        <fullName evidence="1">Tetrahydrodipicolinate N-succinyltransferase</fullName>
        <shortName evidence="1">THDP succinyltransferase</shortName>
        <shortName evidence="1">THP succinyltransferase</shortName>
        <shortName evidence="1">Tetrahydropicolinate succinylase</shortName>
    </alternativeName>
</protein>
<gene>
    <name evidence="1" type="primary">dapD</name>
    <name type="ordered locus">WIGBR3940</name>
</gene>